<comment type="function">
    <text evidence="2">Catalyzes the ortho-cleavage of the aromatic ring of hydroxyquinol.</text>
</comment>
<comment type="catalytic activity">
    <reaction evidence="2">
        <text>benzene-1,2,4-triol + O2 = maleylacetate + 2 H(+)</text>
        <dbReference type="Rhea" id="RHEA:35595"/>
        <dbReference type="ChEBI" id="CHEBI:15378"/>
        <dbReference type="ChEBI" id="CHEBI:15379"/>
        <dbReference type="ChEBI" id="CHEBI:16468"/>
        <dbReference type="ChEBI" id="CHEBI:16971"/>
        <dbReference type="EC" id="1.13.11.37"/>
    </reaction>
</comment>
<comment type="cofactor">
    <cofactor evidence="1">
        <name>Fe(3+)</name>
        <dbReference type="ChEBI" id="CHEBI:29034"/>
    </cofactor>
    <text evidence="1">Binds 1 Fe(3+) ion per subunit.</text>
</comment>
<comment type="activity regulation">
    <text evidence="2">Inhibited by 3,5-dichlorocatechol, chlorohydroquinone and 4,5-dibromocatechol.</text>
</comment>
<comment type="biophysicochemical properties">
    <kinetics>
        <KM evidence="2">1.2 uM for hydroxyquinol</KM>
        <Vmax evidence="2">55.0 umol/min/mg enzyme with hydroxyquinol as substrate</Vmax>
        <text>5-chlorohydroxyquinols and 6-chloro-chlorohydroxyquinols are also substrates.</text>
    </kinetics>
    <phDependence>
        <text evidence="2">Optimum pH is 7.5.</text>
    </phDependence>
    <temperatureDependence>
        <text evidence="2">Optimum temperature is 50-55 degrees Celsius.</text>
    </temperatureDependence>
</comment>
<comment type="pathway">
    <text>Aromatic compound metabolism; beta-ketoadipate pathway; 3-oxoadipate from 3,4-dihydroxybenzoate: step 2/4.</text>
</comment>
<comment type="subunit">
    <text evidence="1 2">Homodimer.</text>
</comment>
<comment type="similarity">
    <text evidence="3">Belongs to the intradiol ring-cleavage dioxygenase family.</text>
</comment>
<reference key="1">
    <citation type="journal article" date="2005" name="J. Biol. Chem.">
        <title>Crystal structure of the hydroxyquinol 1,2-dioxygenase from Nocardioides simplex 3E, a key enzyme involved in polychlorinated aromatics biodegradation.</title>
        <authorList>
            <person name="Ferraroni M."/>
            <person name="Seifert J."/>
            <person name="Travkin V.M."/>
            <person name="Thiel M."/>
            <person name="Kaschabek S."/>
            <person name="Scozzafava A."/>
            <person name="Golovleva L."/>
            <person name="Schloemann M."/>
            <person name="Briganti F."/>
        </authorList>
    </citation>
    <scope>NUCLEOTIDE SEQUENCE [GENOMIC DNA]</scope>
    <scope>PARTIAL PROTEIN SEQUENCE</scope>
    <scope>X-RAY CRYSTALLOGRAPHY (1.75 ANGSTROMS) IN COMPLEX WITH FE(3+)</scope>
    <scope>COFACTOR</scope>
    <scope>CHARACTERIZATION</scope>
    <source>
        <strain>3E</strain>
    </source>
</reference>
<reference key="2">
    <citation type="journal article" date="1997" name="FEBS Lett.">
        <title>Characterization of an intradiol dioxygenase involved in the biodegradation of the chlorophenoxy herbicides 2,4-D and 2,4,5-T.</title>
        <authorList>
            <person name="Travkin V.M."/>
            <person name="Jadan A.P."/>
            <person name="Briganti F."/>
            <person name="Scozzafava A."/>
            <person name="Golovleva L.A."/>
        </authorList>
    </citation>
    <scope>FUNCTION</scope>
    <scope>CATALYTIC ACTIVITY</scope>
    <scope>BIOPHYSICOCHEMICAL PROPERTIES</scope>
    <scope>SUBUNIT</scope>
    <scope>ACTIVITY REGULATION</scope>
    <source>
        <strain>3E</strain>
    </source>
</reference>
<dbReference type="EC" id="1.13.11.37" evidence="2"/>
<dbReference type="EMBL" id="AY822041">
    <property type="protein sequence ID" value="AAV71144.1"/>
    <property type="molecule type" value="Genomic_DNA"/>
</dbReference>
<dbReference type="RefSeq" id="WP_203042816.1">
    <property type="nucleotide sequence ID" value="NZ_JADCLI010000001.1"/>
</dbReference>
<dbReference type="PDB" id="1TMX">
    <property type="method" value="X-ray"/>
    <property type="resolution" value="1.75 A"/>
    <property type="chains" value="A/B=1-293"/>
</dbReference>
<dbReference type="PDBsum" id="1TMX"/>
<dbReference type="SMR" id="Q5PXQ6"/>
<dbReference type="STRING" id="2045.KR76_25510"/>
<dbReference type="DrugBank" id="DB03793">
    <property type="generic name" value="Benzoic acid"/>
</dbReference>
<dbReference type="KEGG" id="ag:AAV71144"/>
<dbReference type="eggNOG" id="COG3485">
    <property type="taxonomic scope" value="Bacteria"/>
</dbReference>
<dbReference type="BRENDA" id="1.13.11.37">
    <property type="organism ID" value="456"/>
</dbReference>
<dbReference type="SABIO-RK" id="Q5PXQ6"/>
<dbReference type="UniPathway" id="UPA00157">
    <property type="reaction ID" value="UER00268"/>
</dbReference>
<dbReference type="EvolutionaryTrace" id="Q5PXQ6"/>
<dbReference type="GO" id="GO:0047074">
    <property type="term" value="F:4-hydroxycatechol 1,2-dioxygenase activity"/>
    <property type="evidence" value="ECO:0007669"/>
    <property type="project" value="UniProtKB-EC"/>
</dbReference>
<dbReference type="GO" id="GO:0018576">
    <property type="term" value="F:catechol 1,2-dioxygenase activity"/>
    <property type="evidence" value="ECO:0007669"/>
    <property type="project" value="InterPro"/>
</dbReference>
<dbReference type="GO" id="GO:0008199">
    <property type="term" value="F:ferric iron binding"/>
    <property type="evidence" value="ECO:0007669"/>
    <property type="project" value="InterPro"/>
</dbReference>
<dbReference type="GO" id="GO:0042952">
    <property type="term" value="P:beta-ketoadipate pathway"/>
    <property type="evidence" value="ECO:0007669"/>
    <property type="project" value="UniProtKB-UniPathway"/>
</dbReference>
<dbReference type="GO" id="GO:0009712">
    <property type="term" value="P:catechol-containing compound metabolic process"/>
    <property type="evidence" value="ECO:0007669"/>
    <property type="project" value="InterPro"/>
</dbReference>
<dbReference type="CDD" id="cd03461">
    <property type="entry name" value="1_2-HQD"/>
    <property type="match status" value="1"/>
</dbReference>
<dbReference type="Gene3D" id="2.60.130.10">
    <property type="entry name" value="Aromatic compound dioxygenase"/>
    <property type="match status" value="1"/>
</dbReference>
<dbReference type="InterPro" id="IPR039390">
    <property type="entry name" value="1_2-HQD/HQD"/>
</dbReference>
<dbReference type="InterPro" id="IPR007535">
    <property type="entry name" value="Catechol_dOase_N"/>
</dbReference>
<dbReference type="InterPro" id="IPR000627">
    <property type="entry name" value="Intradiol_dOase_C"/>
</dbReference>
<dbReference type="InterPro" id="IPR015889">
    <property type="entry name" value="Intradiol_dOase_core"/>
</dbReference>
<dbReference type="InterPro" id="IPR050770">
    <property type="entry name" value="Intradiol_RC_Dioxygenase"/>
</dbReference>
<dbReference type="PANTHER" id="PTHR33711">
    <property type="entry name" value="DIOXYGENASE, PUTATIVE (AFU_ORTHOLOGUE AFUA_2G02910)-RELATED"/>
    <property type="match status" value="1"/>
</dbReference>
<dbReference type="PANTHER" id="PTHR33711:SF7">
    <property type="entry name" value="INTRADIOL RING-CLEAVAGE DIOXYGENASES DOMAIN-CONTAINING PROTEIN-RELATED"/>
    <property type="match status" value="1"/>
</dbReference>
<dbReference type="Pfam" id="PF00775">
    <property type="entry name" value="Dioxygenase_C"/>
    <property type="match status" value="1"/>
</dbReference>
<dbReference type="Pfam" id="PF04444">
    <property type="entry name" value="Dioxygenase_N"/>
    <property type="match status" value="1"/>
</dbReference>
<dbReference type="SUPFAM" id="SSF49482">
    <property type="entry name" value="Aromatic compound dioxygenase"/>
    <property type="match status" value="1"/>
</dbReference>
<dbReference type="PROSITE" id="PS00083">
    <property type="entry name" value="INTRADIOL_DIOXYGENAS"/>
    <property type="match status" value="1"/>
</dbReference>
<protein>
    <recommendedName>
        <fullName>Hydroxyquinol 1,2-dioxygenase</fullName>
        <ecNumber evidence="2">1.13.11.37</ecNumber>
    </recommendedName>
    <alternativeName>
        <fullName>1,2-HQD</fullName>
    </alternativeName>
</protein>
<name>CHQB_NOCSI</name>
<evidence type="ECO:0000269" key="1">
    <source>
    </source>
</evidence>
<evidence type="ECO:0000269" key="2">
    <source>
    </source>
</evidence>
<evidence type="ECO:0000305" key="3"/>
<evidence type="ECO:0007829" key="4">
    <source>
        <dbReference type="PDB" id="1TMX"/>
    </source>
</evidence>
<keyword id="KW-0002">3D-structure</keyword>
<keyword id="KW-0058">Aromatic hydrocarbons catabolism</keyword>
<keyword id="KW-0223">Dioxygenase</keyword>
<keyword id="KW-0903">Direct protein sequencing</keyword>
<keyword id="KW-0408">Iron</keyword>
<keyword id="KW-0479">Metal-binding</keyword>
<keyword id="KW-0560">Oxidoreductase</keyword>
<feature type="chain" id="PRO_0000085086" description="Hydroxyquinol 1,2-dioxygenase">
    <location>
        <begin position="1"/>
        <end position="293"/>
    </location>
</feature>
<feature type="binding site" evidence="1">
    <location>
        <position position="164"/>
    </location>
    <ligand>
        <name>Fe cation</name>
        <dbReference type="ChEBI" id="CHEBI:24875"/>
    </ligand>
</feature>
<feature type="binding site" evidence="1">
    <location>
        <position position="197"/>
    </location>
    <ligand>
        <name>Fe cation</name>
        <dbReference type="ChEBI" id="CHEBI:24875"/>
    </ligand>
</feature>
<feature type="binding site" evidence="1">
    <location>
        <position position="221"/>
    </location>
    <ligand>
        <name>Fe cation</name>
        <dbReference type="ChEBI" id="CHEBI:24875"/>
    </ligand>
</feature>
<feature type="binding site" evidence="1">
    <location>
        <position position="223"/>
    </location>
    <ligand>
        <name>Fe cation</name>
        <dbReference type="ChEBI" id="CHEBI:24875"/>
    </ligand>
</feature>
<feature type="helix" evidence="4">
    <location>
        <begin position="7"/>
        <end position="23"/>
    </location>
</feature>
<feature type="turn" evidence="4">
    <location>
        <begin position="24"/>
        <end position="26"/>
    </location>
</feature>
<feature type="helix" evidence="4">
    <location>
        <begin position="30"/>
        <end position="50"/>
    </location>
</feature>
<feature type="helix" evidence="4">
    <location>
        <begin position="54"/>
        <end position="70"/>
    </location>
</feature>
<feature type="helix" evidence="4">
    <location>
        <begin position="77"/>
        <end position="84"/>
    </location>
</feature>
<feature type="helix" evidence="4">
    <location>
        <begin position="87"/>
        <end position="95"/>
    </location>
</feature>
<feature type="strand" evidence="4">
    <location>
        <begin position="133"/>
        <end position="142"/>
    </location>
</feature>
<feature type="strand" evidence="4">
    <location>
        <begin position="152"/>
        <end position="156"/>
    </location>
</feature>
<feature type="helix" evidence="4">
    <location>
        <begin position="165"/>
        <end position="167"/>
    </location>
</feature>
<feature type="strand" evidence="4">
    <location>
        <begin position="168"/>
        <end position="170"/>
    </location>
</feature>
<feature type="strand" evidence="4">
    <location>
        <begin position="175"/>
        <end position="180"/>
    </location>
</feature>
<feature type="strand" evidence="4">
    <location>
        <begin position="185"/>
        <end position="192"/>
    </location>
</feature>
<feature type="helix" evidence="4">
    <location>
        <begin position="204"/>
        <end position="211"/>
    </location>
</feature>
<feature type="strand" evidence="4">
    <location>
        <begin position="221"/>
        <end position="227"/>
    </location>
</feature>
<feature type="strand" evidence="4">
    <location>
        <begin position="234"/>
        <end position="240"/>
    </location>
</feature>
<feature type="helix" evidence="4">
    <location>
        <begin position="244"/>
        <end position="247"/>
    </location>
</feature>
<feature type="helix" evidence="4">
    <location>
        <begin position="256"/>
        <end position="258"/>
    </location>
</feature>
<feature type="strand" evidence="4">
    <location>
        <begin position="263"/>
        <end position="265"/>
    </location>
</feature>
<feature type="helix" evidence="4">
    <location>
        <begin position="272"/>
        <end position="274"/>
    </location>
</feature>
<feature type="strand" evidence="4">
    <location>
        <begin position="281"/>
        <end position="285"/>
    </location>
</feature>
<feature type="strand" evidence="4">
    <location>
        <begin position="288"/>
        <end position="290"/>
    </location>
</feature>
<proteinExistence type="evidence at protein level"/>
<sequence length="293" mass="31967">MSTPVSAEQQAREQDLVERVLRSFDATADPRLKQVMQALTRHLHAFLREVRLTEAEWETGIGFLTDAGHVTNERRQEFILLSDVLGASMQTIAMNNEAHGDATEATVFGPFFVEGSPRIESGGDIAGGAAGEPCWVEGTVTDTDGNPVPDARIEVWEADDDGFYDVQYDDDRTAARAHLLSGPDGGYAFWAITPTPYPIPHDGPVGRMLAATGRSPMRASHLHFMVTAPGRRTLVTHIFVEGDELLDRDSVFGVKDSLVKSFERQPAGAPTPGGREIDGPWSRVRFDIVLAPA</sequence>
<gene>
    <name type="primary">chqB</name>
</gene>
<organism>
    <name type="scientific">Nocardioides simplex</name>
    <name type="common">Arthrobacter simplex</name>
    <dbReference type="NCBI Taxonomy" id="2045"/>
    <lineage>
        <taxon>Bacteria</taxon>
        <taxon>Bacillati</taxon>
        <taxon>Actinomycetota</taxon>
        <taxon>Actinomycetes</taxon>
        <taxon>Propionibacteriales</taxon>
        <taxon>Nocardioidaceae</taxon>
        <taxon>Pimelobacter</taxon>
    </lineage>
</organism>
<accession>Q5PXQ6</accession>